<evidence type="ECO:0000269" key="1">
    <source>
    </source>
</evidence>
<evidence type="ECO:0000269" key="2">
    <source>
    </source>
</evidence>
<evidence type="ECO:0000269" key="3">
    <source>
    </source>
</evidence>
<evidence type="ECO:0000303" key="4">
    <source>
    </source>
</evidence>
<evidence type="ECO:0000305" key="5"/>
<evidence type="ECO:0000305" key="6">
    <source>
    </source>
</evidence>
<evidence type="ECO:0000312" key="7">
    <source>
        <dbReference type="EMBL" id="AAN79728.1"/>
    </source>
</evidence>
<accession>A0A0H2V630</accession>
<reference key="1">
    <citation type="journal article" date="2002" name="Proc. Natl. Acad. Sci. U.S.A.">
        <title>Extensive mosaic structure revealed by the complete genome sequence of uropathogenic Escherichia coli.</title>
        <authorList>
            <person name="Welch R.A."/>
            <person name="Burland V."/>
            <person name="Plunkett G. III"/>
            <person name="Redford P."/>
            <person name="Roesch P."/>
            <person name="Rasko D."/>
            <person name="Buckles E.L."/>
            <person name="Liou S.-R."/>
            <person name="Boutin A."/>
            <person name="Hackett J."/>
            <person name="Stroud D."/>
            <person name="Mayhew G.F."/>
            <person name="Rose D.J."/>
            <person name="Zhou S."/>
            <person name="Schwartz D.C."/>
            <person name="Perna N.T."/>
            <person name="Mobley H.L.T."/>
            <person name="Donnenberg M.S."/>
            <person name="Blattner F.R."/>
        </authorList>
    </citation>
    <scope>NUCLEOTIDE SEQUENCE [LARGE SCALE GENOMIC DNA]</scope>
    <source>
        <strain>CFT073 / ATCC 700928 / UPEC</strain>
    </source>
</reference>
<reference key="2">
    <citation type="journal article" date="2005" name="Proc. Natl. Acad. Sci. U.S.A.">
        <title>In vitro characterization of IroB, a pathogen-associated C-glycosyltransferase.</title>
        <authorList>
            <person name="Fischbach M.A."/>
            <person name="Lin H."/>
            <person name="Liu D.R."/>
            <person name="Walsh C.T."/>
        </authorList>
    </citation>
    <scope>FUNCTION</scope>
    <scope>CATALYTIC ACTIVITY</scope>
    <scope>BIOPHYSICOCHEMICAL PROPERTIES</scope>
    <scope>PATHWAY</scope>
    <source>
        <strain>CFT073 / ATCC 700928 / UPEC</strain>
    </source>
</reference>
<reference key="3">
    <citation type="journal article" date="2006" name="ACS Chem. Biol.">
        <title>Enzymatic tailoring of enterobactin alters membrane partitioning and iron acquisition.</title>
        <authorList>
            <person name="Luo M."/>
            <person name="Lin H."/>
            <person name="Fischbach M.A."/>
            <person name="Liu D.R."/>
            <person name="Walsh C.T."/>
            <person name="Groves J.T."/>
        </authorList>
    </citation>
    <scope>FUNCTION</scope>
</reference>
<reference key="4">
    <citation type="journal article" date="2014" name="Biochim. Biophys. Acta">
        <title>The C-glycosyltransferase IroB from pathogenic Escherichia coli: identification of residues required for efficient catalysis.</title>
        <authorList>
            <person name="Foshag D."/>
            <person name="Campbell C."/>
            <person name="Pawelek P.D."/>
        </authorList>
    </citation>
    <scope>FUNCTION</scope>
    <scope>CATALYTIC ACTIVITY</scope>
    <scope>SUBCELLULAR LOCATION</scope>
    <scope>MUTAGENESIS OF 65-HIS-HIS-66; GLU-67; TRP-264 AND ASP-304</scope>
    <source>
        <strain>CFT073 / ATCC 700928 / UPEC</strain>
    </source>
</reference>
<keyword id="KW-0963">Cytoplasm</keyword>
<keyword id="KW-0259">Enterobactin biosynthesis</keyword>
<keyword id="KW-0328">Glycosyltransferase</keyword>
<keyword id="KW-1185">Reference proteome</keyword>
<keyword id="KW-0808">Transferase</keyword>
<sequence length="371" mass="40292">MRILFVGPPLYGLLYPVLSLAQAFRVNGHEVLIASGGQFAQKAAEAGLVVFDAAPGLDSEAGYRHHEAQRKKSNIGTQMGNFSFFSEEMADHLVEFAGHWRPDLIIYPPLGVIGPLIAAKYDIPVVMQTVGFGHTPWHIRGVTRSLTDAYRRHNVGATPRDMAWIDVTPPSMSILENDGEPIIPMQYVPYNGGAVWEPWWERRPDRKRLLVSLGTVKPMVDGLDLIAWVMDSASEVDAEIILHISANARSDLRSLPSNVRLVDWIPMGVFLNGADGFIHHGGAGNTLTALHAGIPQIVFGQGADRPVNARVVAERGCGIIPGDVGLSSNMINAFLNNRSLRKASEEVAAEMAAQPCPGEVAKSLITMVQKG</sequence>
<comment type="function">
    <text evidence="1 2 3">Catalyzes the successive monoglucosylation, diglucosylation and triglucosylation of enterobactin (Ent) (PubMed:15598734, PubMed:24960592). Transfers glucosyl groups from uridine-5'-diphosphoglucose (UDP-Glc) to C5 of one, two or three of the 2,3-dihydroxybenzoyl (DHB) units of Ent to yield monoglucosyl-C-Ent (MGE), diglucosyl-C-Ent (DGE) and triglucosyl-C-Ent (TGE) (PubMed:15598734, PubMed:24960592). Glucosylation decreases the membrane affinity of Ent and increases the iron acquisition rate (PubMed:17163637).</text>
</comment>
<comment type="catalytic activity">
    <reaction evidence="1 3">
        <text>enterobactin + UDP-alpha-D-glucose = monoglucosyl-enterobactin + UDP</text>
        <dbReference type="Rhea" id="RHEA:24448"/>
        <dbReference type="ChEBI" id="CHEBI:58223"/>
        <dbReference type="ChEBI" id="CHEBI:58885"/>
        <dbReference type="ChEBI" id="CHEBI:77805"/>
        <dbReference type="ChEBI" id="CHEBI:142958"/>
        <dbReference type="EC" id="2.4.1.369"/>
    </reaction>
    <physiologicalReaction direction="left-to-right" evidence="1 3">
        <dbReference type="Rhea" id="RHEA:24449"/>
    </physiologicalReaction>
</comment>
<comment type="catalytic activity">
    <reaction evidence="1 3">
        <text>monoglucosyl-enterobactin + UDP-alpha-D-glucose = diglucosyl-enterobactin + UDP + H(+)</text>
        <dbReference type="Rhea" id="RHEA:59096"/>
        <dbReference type="ChEBI" id="CHEBI:15378"/>
        <dbReference type="ChEBI" id="CHEBI:58223"/>
        <dbReference type="ChEBI" id="CHEBI:58885"/>
        <dbReference type="ChEBI" id="CHEBI:142958"/>
        <dbReference type="ChEBI" id="CHEBI:142959"/>
        <dbReference type="EC" id="2.4.1.369"/>
    </reaction>
    <physiologicalReaction direction="left-to-right" evidence="1 3">
        <dbReference type="Rhea" id="RHEA:59097"/>
    </physiologicalReaction>
</comment>
<comment type="catalytic activity">
    <reaction evidence="1 3">
        <text>diglucosyl-enterobactin + UDP-alpha-D-glucose = triglucosyl-enterobactin + UDP + H(+)</text>
        <dbReference type="Rhea" id="RHEA:59100"/>
        <dbReference type="ChEBI" id="CHEBI:15378"/>
        <dbReference type="ChEBI" id="CHEBI:58223"/>
        <dbReference type="ChEBI" id="CHEBI:58885"/>
        <dbReference type="ChEBI" id="CHEBI:142959"/>
        <dbReference type="ChEBI" id="CHEBI:142960"/>
        <dbReference type="EC" id="2.4.1.369"/>
    </reaction>
    <physiologicalReaction direction="left-to-right" evidence="1 3">
        <dbReference type="Rhea" id="RHEA:59101"/>
    </physiologicalReaction>
</comment>
<comment type="biophysicochemical properties">
    <kinetics>
        <KM evidence="1">5.2 uM for enterobactin</KM>
        <KM evidence="1">13.3 uM for UDP-Glc (for the first C-glucosylation)</KM>
        <text evidence="1">kcat is 11.2 min(-1) with enterobactin as substrate. kcat is 9.7 min(-1) with UDP-Glc as substrate (for the first C-glucosylation).</text>
    </kinetics>
</comment>
<comment type="pathway">
    <text evidence="1">Siderophore biosynthesis; enterobactin biosynthesis.</text>
</comment>
<comment type="subcellular location">
    <subcellularLocation>
        <location evidence="6">Cytoplasm</location>
    </subcellularLocation>
    <text evidence="6">May associate with the inner membrane via hydrophobic and electrostatic interactions.</text>
</comment>
<comment type="similarity">
    <text evidence="5">Belongs to the glycosyltransferase 28 family.</text>
</comment>
<comment type="sequence caution" evidence="5">
    <conflict type="erroneous initiation">
        <sequence resource="EMBL-CDS" id="AAN79728"/>
    </conflict>
    <text>Extended N-terminus.</text>
</comment>
<gene>
    <name evidence="4" type="primary">iroB</name>
    <name evidence="7" type="ordered locus">c1254</name>
</gene>
<protein>
    <recommendedName>
        <fullName evidence="5">Enterobactin C-glucosyltransferase</fullName>
        <shortName evidence="4">Ent C-glucosyltransferase</shortName>
        <ecNumber evidence="1 3">2.4.1.369</ecNumber>
    </recommendedName>
</protein>
<proteinExistence type="evidence at protein level"/>
<feature type="chain" id="PRO_0000452107" description="Enterobactin C-glucosyltransferase">
    <location>
        <begin position="1"/>
        <end position="371"/>
    </location>
</feature>
<feature type="mutagenesis site" description="Converts 92% of Ent to MGE (60%) and DGE (32%)." evidence="3">
    <original>HH</original>
    <variation>AA</variation>
    <location>
        <begin position="65"/>
        <end position="66"/>
    </location>
</feature>
<feature type="mutagenesis site" description="Converts 29% of Ent to MGE." evidence="3">
    <original>E</original>
    <variation>A</variation>
    <location>
        <position position="67"/>
    </location>
</feature>
<feature type="mutagenesis site" description="Convert 55% of Ent to MGE (45%) and DGE (10%)." evidence="3">
    <original>W</original>
    <variation>L</variation>
    <location>
        <position position="264"/>
    </location>
</feature>
<feature type="mutagenesis site" description="Loss of activity." evidence="3">
    <original>D</original>
    <variation>N</variation>
    <location>
        <position position="304"/>
    </location>
</feature>
<dbReference type="EC" id="2.4.1.369" evidence="1 3"/>
<dbReference type="EMBL" id="AE014075">
    <property type="protein sequence ID" value="AAN79728.1"/>
    <property type="status" value="ALT_INIT"/>
    <property type="molecule type" value="Genomic_DNA"/>
</dbReference>
<dbReference type="RefSeq" id="WP_001221122.1">
    <property type="nucleotide sequence ID" value="NZ_CP051263.1"/>
</dbReference>
<dbReference type="SMR" id="A0A0H2V630"/>
<dbReference type="STRING" id="199310.c1254"/>
<dbReference type="KEGG" id="ecc:c1254"/>
<dbReference type="eggNOG" id="COG1819">
    <property type="taxonomic scope" value="Bacteria"/>
</dbReference>
<dbReference type="HOGENOM" id="CLU_000537_7_4_6"/>
<dbReference type="BioCyc" id="MetaCyc:MONOMER-20653"/>
<dbReference type="BRENDA" id="2.4.1.369">
    <property type="organism ID" value="16864"/>
</dbReference>
<dbReference type="UniPathway" id="UPA00017"/>
<dbReference type="Proteomes" id="UP000001410">
    <property type="component" value="Chromosome"/>
</dbReference>
<dbReference type="GO" id="GO:0005737">
    <property type="term" value="C:cytoplasm"/>
    <property type="evidence" value="ECO:0007669"/>
    <property type="project" value="UniProtKB-SubCell"/>
</dbReference>
<dbReference type="GO" id="GO:0016758">
    <property type="term" value="F:hexosyltransferase activity"/>
    <property type="evidence" value="ECO:0007669"/>
    <property type="project" value="UniProtKB-ARBA"/>
</dbReference>
<dbReference type="GO" id="GO:0008194">
    <property type="term" value="F:UDP-glycosyltransferase activity"/>
    <property type="evidence" value="ECO:0007669"/>
    <property type="project" value="InterPro"/>
</dbReference>
<dbReference type="GO" id="GO:0009239">
    <property type="term" value="P:enterobactin biosynthetic process"/>
    <property type="evidence" value="ECO:0007669"/>
    <property type="project" value="UniProtKB-UniPathway"/>
</dbReference>
<dbReference type="CDD" id="cd03784">
    <property type="entry name" value="GT1_Gtf-like"/>
    <property type="match status" value="1"/>
</dbReference>
<dbReference type="Gene3D" id="3.40.50.2000">
    <property type="entry name" value="Glycogen Phosphorylase B"/>
    <property type="match status" value="2"/>
</dbReference>
<dbReference type="InterPro" id="IPR010610">
    <property type="entry name" value="EryCIII-like_C"/>
</dbReference>
<dbReference type="InterPro" id="IPR048284">
    <property type="entry name" value="EryCIII-like_N"/>
</dbReference>
<dbReference type="InterPro" id="IPR050426">
    <property type="entry name" value="Glycosyltransferase_28"/>
</dbReference>
<dbReference type="InterPro" id="IPR002213">
    <property type="entry name" value="UDP_glucos_trans"/>
</dbReference>
<dbReference type="PANTHER" id="PTHR48050">
    <property type="entry name" value="STEROL 3-BETA-GLUCOSYLTRANSFERASE"/>
    <property type="match status" value="1"/>
</dbReference>
<dbReference type="PANTHER" id="PTHR48050:SF13">
    <property type="entry name" value="STEROL 3-BETA-GLUCOSYLTRANSFERASE UGT80A2"/>
    <property type="match status" value="1"/>
</dbReference>
<dbReference type="Pfam" id="PF06722">
    <property type="entry name" value="EryCIII-like_C"/>
    <property type="match status" value="1"/>
</dbReference>
<dbReference type="Pfam" id="PF21036">
    <property type="entry name" value="EryCIII-like_N"/>
    <property type="match status" value="1"/>
</dbReference>
<dbReference type="SUPFAM" id="SSF53756">
    <property type="entry name" value="UDP-Glycosyltransferase/glycogen phosphorylase"/>
    <property type="match status" value="1"/>
</dbReference>
<name>IROB_ECOL6</name>
<organism>
    <name type="scientific">Escherichia coli O6:H1 (strain CFT073 / ATCC 700928 / UPEC)</name>
    <dbReference type="NCBI Taxonomy" id="199310"/>
    <lineage>
        <taxon>Bacteria</taxon>
        <taxon>Pseudomonadati</taxon>
        <taxon>Pseudomonadota</taxon>
        <taxon>Gammaproteobacteria</taxon>
        <taxon>Enterobacterales</taxon>
        <taxon>Enterobacteriaceae</taxon>
        <taxon>Escherichia</taxon>
    </lineage>
</organism>